<organismHost>
    <name type="scientific">Homo sapiens</name>
    <name type="common">Human</name>
    <dbReference type="NCBI Taxonomy" id="9606"/>
</organismHost>
<protein>
    <recommendedName>
        <fullName>Kelch repeat protein C2</fullName>
    </recommendedName>
</protein>
<name>VC02_VACCT</name>
<feature type="chain" id="PRO_0000119158" description="Kelch repeat protein C2">
    <location>
        <begin position="1"/>
        <end position="512"/>
    </location>
</feature>
<feature type="domain" description="BTB" evidence="1">
    <location>
        <begin position="2"/>
        <end position="67"/>
    </location>
</feature>
<feature type="repeat" description="Kelch 1">
    <location>
        <begin position="216"/>
        <end position="261"/>
    </location>
</feature>
<feature type="repeat" description="Kelch 2">
    <location>
        <begin position="262"/>
        <end position="307"/>
    </location>
</feature>
<feature type="repeat" description="Kelch 3">
    <location>
        <begin position="309"/>
        <end position="354"/>
    </location>
</feature>
<feature type="repeat" description="Kelch 4">
    <location>
        <begin position="356"/>
        <end position="403"/>
    </location>
</feature>
<feature type="repeat" description="Kelch 5">
    <location>
        <begin position="405"/>
        <end position="449"/>
    </location>
</feature>
<feature type="repeat" description="Kelch 6">
    <location>
        <begin position="452"/>
        <end position="498"/>
    </location>
</feature>
<keyword id="KW-0244">Early protein</keyword>
<keyword id="KW-0880">Kelch repeat</keyword>
<keyword id="KW-0677">Repeat</keyword>
<evidence type="ECO:0000255" key="1">
    <source>
        <dbReference type="PROSITE-ProRule" id="PRU00037"/>
    </source>
</evidence>
<evidence type="ECO:0000305" key="2"/>
<comment type="similarity">
    <text evidence="2">Belongs to the poxviruses Kelch family.</text>
</comment>
<reference key="1">
    <citation type="submission" date="1998-09" db="EMBL/GenBank/DDBJ databases">
        <title>Complete genomic sequence of vaccinia virus (Tian Tan strain).</title>
        <authorList>
            <person name="Jin Q."/>
            <person name="Hou Y.D."/>
            <person name="Cheng N.H."/>
            <person name="Yao E.M."/>
            <person name="Cheng S.X."/>
            <person name="Yang X.K."/>
            <person name="Jing D.Y."/>
            <person name="Yu W.H."/>
            <person name="Yuan J.S."/>
            <person name="Ma X.J."/>
        </authorList>
    </citation>
    <scope>NUCLEOTIDE SEQUENCE [LARGE SCALE GENOMIC DNA]</scope>
</reference>
<sequence>MESVIFSINGEIIQVNKEIITASPYNFFKRIQDHHLKDEAIILNGINYHAFESLLDYIRWKKINITINNVEMILVAAIIIDVPPVVDLCVKTMIHNINSTNCIRMFNFSKQYGIKKLYNASMSEIINNITAVTSDPEFGKLSKDELTTILSHEDVNVNHEDVTAMILLKWIHKNPNDVDIINILHPKFMTNTMRNAISLLGLTISKSTKPVTRNGIKHNIVVIKNSDYISTITHYSPRTEYWTIVGNTDRQFYNANVLHNCLYIIGGMINNRHVYSVSRVDLETKKWKTVTNMSSLKSEVSTCVNNGKLYVIGGLEFSISTGVAEYLKHGTSKWIRLPNLITPRYSGASVFVNDDIYVMGGVYTTYEKYVVLNDVECFTKNRWIKKSPMPRHHSIVYAVEYDGDIYVITGITHETRNYLYKYIVKEDKWIELYMYFNHVGKMFVCSCGDYILIIADAKYEYYPKSNTWNLFDMSTRNIEYYDMFTKDETPKCNVTHKSLPSFLSNCEKQFLQ</sequence>
<organism>
    <name type="scientific">Vaccinia virus (strain Tian Tan)</name>
    <name type="common">VACV</name>
    <dbReference type="NCBI Taxonomy" id="10253"/>
    <lineage>
        <taxon>Viruses</taxon>
        <taxon>Varidnaviria</taxon>
        <taxon>Bamfordvirae</taxon>
        <taxon>Nucleocytoviricota</taxon>
        <taxon>Pokkesviricetes</taxon>
        <taxon>Chitovirales</taxon>
        <taxon>Poxviridae</taxon>
        <taxon>Chordopoxvirinae</taxon>
        <taxon>Orthopoxvirus</taxon>
        <taxon>Vaccinia virus</taxon>
    </lineage>
</organism>
<gene>
    <name type="ORF">TC2L</name>
</gene>
<proteinExistence type="inferred from homology"/>
<accession>Q9JFG1</accession>
<dbReference type="EMBL" id="AF095689">
    <property type="protein sequence ID" value="AAF33878.1"/>
    <property type="molecule type" value="Genomic_DNA"/>
</dbReference>
<dbReference type="SMR" id="Q9JFG1"/>
<dbReference type="Proteomes" id="UP000163220">
    <property type="component" value="Genome"/>
</dbReference>
<dbReference type="Gene3D" id="1.25.40.420">
    <property type="match status" value="1"/>
</dbReference>
<dbReference type="Gene3D" id="2.120.10.80">
    <property type="entry name" value="Kelch-type beta propeller"/>
    <property type="match status" value="1"/>
</dbReference>
<dbReference type="Gene3D" id="3.30.710.10">
    <property type="entry name" value="Potassium Channel Kv1.1, Chain A"/>
    <property type="match status" value="1"/>
</dbReference>
<dbReference type="InterPro" id="IPR011705">
    <property type="entry name" value="BACK"/>
</dbReference>
<dbReference type="InterPro" id="IPR000210">
    <property type="entry name" value="BTB/POZ_dom"/>
</dbReference>
<dbReference type="InterPro" id="IPR015915">
    <property type="entry name" value="Kelch-typ_b-propeller"/>
</dbReference>
<dbReference type="InterPro" id="IPR006652">
    <property type="entry name" value="Kelch_1"/>
</dbReference>
<dbReference type="InterPro" id="IPR011333">
    <property type="entry name" value="SKP1/BTB/POZ_sf"/>
</dbReference>
<dbReference type="PANTHER" id="PTHR24412">
    <property type="entry name" value="KELCH PROTEIN"/>
    <property type="match status" value="1"/>
</dbReference>
<dbReference type="PANTHER" id="PTHR24412:SF480">
    <property type="entry name" value="KELCH-LIKE PROTEIN 8"/>
    <property type="match status" value="1"/>
</dbReference>
<dbReference type="Pfam" id="PF07707">
    <property type="entry name" value="BACK"/>
    <property type="match status" value="1"/>
</dbReference>
<dbReference type="Pfam" id="PF00651">
    <property type="entry name" value="BTB"/>
    <property type="match status" value="1"/>
</dbReference>
<dbReference type="Pfam" id="PF01344">
    <property type="entry name" value="Kelch_1"/>
    <property type="match status" value="3"/>
</dbReference>
<dbReference type="SMART" id="SM00875">
    <property type="entry name" value="BACK"/>
    <property type="match status" value="1"/>
</dbReference>
<dbReference type="SMART" id="SM00225">
    <property type="entry name" value="BTB"/>
    <property type="match status" value="1"/>
</dbReference>
<dbReference type="SMART" id="SM00612">
    <property type="entry name" value="Kelch"/>
    <property type="match status" value="3"/>
</dbReference>
<dbReference type="SUPFAM" id="SSF117281">
    <property type="entry name" value="Kelch motif"/>
    <property type="match status" value="1"/>
</dbReference>
<dbReference type="SUPFAM" id="SSF54695">
    <property type="entry name" value="POZ domain"/>
    <property type="match status" value="1"/>
</dbReference>
<dbReference type="PROSITE" id="PS50097">
    <property type="entry name" value="BTB"/>
    <property type="match status" value="1"/>
</dbReference>